<organism>
    <name type="scientific">Francisella tularensis subsp. tularensis (strain SCHU S4 / Schu 4)</name>
    <dbReference type="NCBI Taxonomy" id="177416"/>
    <lineage>
        <taxon>Bacteria</taxon>
        <taxon>Pseudomonadati</taxon>
        <taxon>Pseudomonadota</taxon>
        <taxon>Gammaproteobacteria</taxon>
        <taxon>Thiotrichales</taxon>
        <taxon>Francisellaceae</taxon>
        <taxon>Francisella</taxon>
    </lineage>
</organism>
<accession>Q5NEV7</accession>
<evidence type="ECO:0000255" key="1">
    <source>
        <dbReference type="HAMAP-Rule" id="MF_00821"/>
    </source>
</evidence>
<proteinExistence type="inferred from homology"/>
<gene>
    <name evidence="1" type="primary">secB1</name>
    <name type="ordered locus">FTT_1500</name>
</gene>
<protein>
    <recommendedName>
        <fullName evidence="1">Protein-export protein SecB 1</fullName>
    </recommendedName>
</protein>
<name>SECB1_FRATT</name>
<dbReference type="EMBL" id="AJ749949">
    <property type="protein sequence ID" value="CAG46133.1"/>
    <property type="molecule type" value="Genomic_DNA"/>
</dbReference>
<dbReference type="RefSeq" id="YP_170435.1">
    <property type="nucleotide sequence ID" value="NC_006570.2"/>
</dbReference>
<dbReference type="SMR" id="Q5NEV7"/>
<dbReference type="STRING" id="177416.FTT_1500"/>
<dbReference type="DNASU" id="3191901"/>
<dbReference type="EnsemblBacteria" id="CAG46133">
    <property type="protein sequence ID" value="CAG46133"/>
    <property type="gene ID" value="FTT_1500"/>
</dbReference>
<dbReference type="KEGG" id="ftu:FTT_1500"/>
<dbReference type="eggNOG" id="COG1952">
    <property type="taxonomic scope" value="Bacteria"/>
</dbReference>
<dbReference type="OrthoDB" id="9795145at2"/>
<dbReference type="Proteomes" id="UP000001174">
    <property type="component" value="Chromosome"/>
</dbReference>
<dbReference type="GO" id="GO:0005737">
    <property type="term" value="C:cytoplasm"/>
    <property type="evidence" value="ECO:0007669"/>
    <property type="project" value="UniProtKB-SubCell"/>
</dbReference>
<dbReference type="GO" id="GO:0051082">
    <property type="term" value="F:unfolded protein binding"/>
    <property type="evidence" value="ECO:0007669"/>
    <property type="project" value="InterPro"/>
</dbReference>
<dbReference type="GO" id="GO:0006457">
    <property type="term" value="P:protein folding"/>
    <property type="evidence" value="ECO:0007669"/>
    <property type="project" value="UniProtKB-UniRule"/>
</dbReference>
<dbReference type="GO" id="GO:0051262">
    <property type="term" value="P:protein tetramerization"/>
    <property type="evidence" value="ECO:0007669"/>
    <property type="project" value="InterPro"/>
</dbReference>
<dbReference type="GO" id="GO:0015031">
    <property type="term" value="P:protein transport"/>
    <property type="evidence" value="ECO:0007669"/>
    <property type="project" value="UniProtKB-UniRule"/>
</dbReference>
<dbReference type="Gene3D" id="3.10.420.10">
    <property type="entry name" value="SecB-like"/>
    <property type="match status" value="1"/>
</dbReference>
<dbReference type="HAMAP" id="MF_00821">
    <property type="entry name" value="SecB"/>
    <property type="match status" value="1"/>
</dbReference>
<dbReference type="InterPro" id="IPR003708">
    <property type="entry name" value="SecB"/>
</dbReference>
<dbReference type="InterPro" id="IPR035958">
    <property type="entry name" value="SecB-like_sf"/>
</dbReference>
<dbReference type="NCBIfam" id="NF004391">
    <property type="entry name" value="PRK05751.1-2"/>
    <property type="match status" value="1"/>
</dbReference>
<dbReference type="NCBIfam" id="TIGR00809">
    <property type="entry name" value="secB"/>
    <property type="match status" value="1"/>
</dbReference>
<dbReference type="PANTHER" id="PTHR36918">
    <property type="match status" value="1"/>
</dbReference>
<dbReference type="PANTHER" id="PTHR36918:SF1">
    <property type="entry name" value="PROTEIN-EXPORT PROTEIN SECB"/>
    <property type="match status" value="1"/>
</dbReference>
<dbReference type="Pfam" id="PF02556">
    <property type="entry name" value="SecB"/>
    <property type="match status" value="1"/>
</dbReference>
<dbReference type="PRINTS" id="PR01594">
    <property type="entry name" value="SECBCHAPRONE"/>
</dbReference>
<dbReference type="SUPFAM" id="SSF54611">
    <property type="entry name" value="SecB-like"/>
    <property type="match status" value="1"/>
</dbReference>
<reference key="1">
    <citation type="journal article" date="2005" name="Nat. Genet.">
        <title>The complete genome sequence of Francisella tularensis, the causative agent of tularemia.</title>
        <authorList>
            <person name="Larsson P."/>
            <person name="Oyston P.C.F."/>
            <person name="Chain P."/>
            <person name="Chu M.C."/>
            <person name="Duffield M."/>
            <person name="Fuxelius H.-H."/>
            <person name="Garcia E."/>
            <person name="Haelltorp G."/>
            <person name="Johansson D."/>
            <person name="Isherwood K.E."/>
            <person name="Karp P.D."/>
            <person name="Larsson E."/>
            <person name="Liu Y."/>
            <person name="Michell S."/>
            <person name="Prior J."/>
            <person name="Prior R."/>
            <person name="Malfatti S."/>
            <person name="Sjoestedt A."/>
            <person name="Svensson K."/>
            <person name="Thompson N."/>
            <person name="Vergez L."/>
            <person name="Wagg J.K."/>
            <person name="Wren B.W."/>
            <person name="Lindler L.E."/>
            <person name="Andersson S.G.E."/>
            <person name="Forsman M."/>
            <person name="Titball R.W."/>
        </authorList>
    </citation>
    <scope>NUCLEOTIDE SEQUENCE [LARGE SCALE GENOMIC DNA]</scope>
    <source>
        <strain>SCHU S4 / Schu 4</strain>
    </source>
</reference>
<comment type="function">
    <text evidence="1">One of the proteins required for the normal export of preproteins out of the cell cytoplasm. It is a molecular chaperone that binds to a subset of precursor proteins, maintaining them in a translocation-competent state. It also specifically binds to its receptor SecA.</text>
</comment>
<comment type="subunit">
    <text evidence="1">Homotetramer, a dimer of dimers. One homotetramer interacts with 1 SecA dimer.</text>
</comment>
<comment type="subcellular location">
    <subcellularLocation>
        <location evidence="1">Cytoplasm</location>
    </subcellularLocation>
</comment>
<comment type="similarity">
    <text evidence="1">Belongs to the SecB family.</text>
</comment>
<sequence>MQNNEIQPSFLIQKVYTKDVSFETINSPACFKEQWNPSSDFNIDINTTKINDENFELDLTITVTTKNNETNAYIAEVTQSGIFTITSMSEEQIDSVLNTYCANTLFPYAKRIIDSSIIKGGFLPLNLAPINFDAIYLQKKSSPKREH</sequence>
<feature type="chain" id="PRO_0000055373" description="Protein-export protein SecB 1">
    <location>
        <begin position="1"/>
        <end position="147"/>
    </location>
</feature>
<keyword id="KW-0143">Chaperone</keyword>
<keyword id="KW-0963">Cytoplasm</keyword>
<keyword id="KW-0653">Protein transport</keyword>
<keyword id="KW-1185">Reference proteome</keyword>
<keyword id="KW-0811">Translocation</keyword>
<keyword id="KW-0813">Transport</keyword>